<protein>
    <recommendedName>
        <fullName>Sorting nexin MVP1</fullName>
    </recommendedName>
</protein>
<gene>
    <name type="primary">MVP1</name>
    <name type="ORF">UMAG_00490</name>
</gene>
<feature type="chain" id="PRO_0000238602" description="Sorting nexin MVP1">
    <location>
        <begin position="1"/>
        <end position="683"/>
    </location>
</feature>
<feature type="domain" description="PX" evidence="2">
    <location>
        <begin position="302"/>
        <end position="418"/>
    </location>
</feature>
<feature type="region of interest" description="Disordered" evidence="3">
    <location>
        <begin position="1"/>
        <end position="25"/>
    </location>
</feature>
<feature type="region of interest" description="Disordered" evidence="3">
    <location>
        <begin position="246"/>
        <end position="276"/>
    </location>
</feature>
<feature type="compositionally biased region" description="Polar residues" evidence="3">
    <location>
        <begin position="248"/>
        <end position="257"/>
    </location>
</feature>
<feature type="binding site" evidence="1">
    <location>
        <position position="338"/>
    </location>
    <ligand>
        <name>a 1,2-diacyl-sn-glycero-3-phospho-(1D-myo-inositol-3-phosphate)</name>
        <dbReference type="ChEBI" id="CHEBI:58088"/>
    </ligand>
</feature>
<feature type="binding site" evidence="1">
    <location>
        <position position="340"/>
    </location>
    <ligand>
        <name>a 1,2-diacyl-sn-glycero-3-phospho-(1D-myo-inositol-3-phosphate)</name>
        <dbReference type="ChEBI" id="CHEBI:58088"/>
    </ligand>
</feature>
<feature type="binding site" evidence="1">
    <location>
        <position position="364"/>
    </location>
    <ligand>
        <name>a 1,2-diacyl-sn-glycero-3-phospho-(1D-myo-inositol-3-phosphate)</name>
        <dbReference type="ChEBI" id="CHEBI:58088"/>
    </ligand>
</feature>
<feature type="binding site" evidence="1">
    <location>
        <position position="385"/>
    </location>
    <ligand>
        <name>a 1,2-diacyl-sn-glycero-3-phospho-(1D-myo-inositol-3-phosphate)</name>
        <dbReference type="ChEBI" id="CHEBI:58088"/>
    </ligand>
</feature>
<organism>
    <name type="scientific">Mycosarcoma maydis</name>
    <name type="common">Corn smut fungus</name>
    <name type="synonym">Ustilago maydis</name>
    <dbReference type="NCBI Taxonomy" id="5270"/>
    <lineage>
        <taxon>Eukaryota</taxon>
        <taxon>Fungi</taxon>
        <taxon>Dikarya</taxon>
        <taxon>Basidiomycota</taxon>
        <taxon>Ustilaginomycotina</taxon>
        <taxon>Ustilaginomycetes</taxon>
        <taxon>Ustilaginales</taxon>
        <taxon>Ustilaginaceae</taxon>
        <taxon>Mycosarcoma</taxon>
    </lineage>
</organism>
<dbReference type="EMBL" id="CM003140">
    <property type="protein sequence ID" value="KIS72068.1"/>
    <property type="molecule type" value="Genomic_DNA"/>
</dbReference>
<dbReference type="RefSeq" id="XP_011386342.1">
    <property type="nucleotide sequence ID" value="XM_011388040.1"/>
</dbReference>
<dbReference type="SMR" id="Q4PHC3"/>
<dbReference type="FunCoup" id="Q4PHC3">
    <property type="interactions" value="67"/>
</dbReference>
<dbReference type="STRING" id="237631.Q4PHC3"/>
<dbReference type="EnsemblFungi" id="KIS72068">
    <property type="protein sequence ID" value="KIS72068"/>
    <property type="gene ID" value="UMAG_00490"/>
</dbReference>
<dbReference type="GeneID" id="23561775"/>
<dbReference type="KEGG" id="uma:UMAG_00490"/>
<dbReference type="VEuPathDB" id="FungiDB:UMAG_00490"/>
<dbReference type="eggNOG" id="KOG2273">
    <property type="taxonomic scope" value="Eukaryota"/>
</dbReference>
<dbReference type="HOGENOM" id="CLU_009058_1_1_1"/>
<dbReference type="InParanoid" id="Q4PHC3"/>
<dbReference type="OMA" id="WEELIWF"/>
<dbReference type="OrthoDB" id="10064318at2759"/>
<dbReference type="Proteomes" id="UP000000561">
    <property type="component" value="Chromosome 1"/>
</dbReference>
<dbReference type="GO" id="GO:0005829">
    <property type="term" value="C:cytosol"/>
    <property type="evidence" value="ECO:0007669"/>
    <property type="project" value="GOC"/>
</dbReference>
<dbReference type="GO" id="GO:0005768">
    <property type="term" value="C:endosome"/>
    <property type="evidence" value="ECO:0000318"/>
    <property type="project" value="GO_Central"/>
</dbReference>
<dbReference type="GO" id="GO:0016020">
    <property type="term" value="C:membrane"/>
    <property type="evidence" value="ECO:0007669"/>
    <property type="project" value="UniProtKB-SubCell"/>
</dbReference>
<dbReference type="GO" id="GO:0032266">
    <property type="term" value="F:phosphatidylinositol-3-phosphate binding"/>
    <property type="evidence" value="ECO:0000318"/>
    <property type="project" value="GO_Central"/>
</dbReference>
<dbReference type="GO" id="GO:0006623">
    <property type="term" value="P:protein targeting to vacuole"/>
    <property type="evidence" value="ECO:0000318"/>
    <property type="project" value="GO_Central"/>
</dbReference>
<dbReference type="GO" id="GO:0042147">
    <property type="term" value="P:retrograde transport, endosome to Golgi"/>
    <property type="evidence" value="ECO:0000318"/>
    <property type="project" value="GO_Central"/>
</dbReference>
<dbReference type="CDD" id="cd07597">
    <property type="entry name" value="BAR_SNX8"/>
    <property type="match status" value="1"/>
</dbReference>
<dbReference type="CDD" id="cd06866">
    <property type="entry name" value="PX_SNX8_Mvp1p_like"/>
    <property type="match status" value="1"/>
</dbReference>
<dbReference type="FunFam" id="3.30.1520.10:FF:000042">
    <property type="entry name" value="Sorting nexin mvp1"/>
    <property type="match status" value="1"/>
</dbReference>
<dbReference type="Gene3D" id="3.30.1520.10">
    <property type="entry name" value="Phox-like domain"/>
    <property type="match status" value="1"/>
</dbReference>
<dbReference type="InterPro" id="IPR001683">
    <property type="entry name" value="PX_dom"/>
</dbReference>
<dbReference type="InterPro" id="IPR036871">
    <property type="entry name" value="PX_dom_sf"/>
</dbReference>
<dbReference type="InterPro" id="IPR028662">
    <property type="entry name" value="SNX8/Mvp1"/>
</dbReference>
<dbReference type="InterPro" id="IPR035704">
    <property type="entry name" value="SNX8/Mvp1_PX"/>
</dbReference>
<dbReference type="InterPro" id="IPR045734">
    <property type="entry name" value="Snx8_BAR_dom"/>
</dbReference>
<dbReference type="PANTHER" id="PTHR47554">
    <property type="entry name" value="SORTING NEXIN MVP1"/>
    <property type="match status" value="1"/>
</dbReference>
<dbReference type="PANTHER" id="PTHR47554:SF1">
    <property type="entry name" value="SORTING NEXIN MVP1"/>
    <property type="match status" value="1"/>
</dbReference>
<dbReference type="Pfam" id="PF00787">
    <property type="entry name" value="PX"/>
    <property type="match status" value="1"/>
</dbReference>
<dbReference type="Pfam" id="PF19566">
    <property type="entry name" value="Snx8_BAR_dom"/>
    <property type="match status" value="1"/>
</dbReference>
<dbReference type="SMART" id="SM00312">
    <property type="entry name" value="PX"/>
    <property type="match status" value="1"/>
</dbReference>
<dbReference type="SUPFAM" id="SSF64268">
    <property type="entry name" value="PX domain"/>
    <property type="match status" value="1"/>
</dbReference>
<dbReference type="PROSITE" id="PS50195">
    <property type="entry name" value="PX"/>
    <property type="match status" value="1"/>
</dbReference>
<name>MVP1_MYCMD</name>
<keyword id="KW-0963">Cytoplasm</keyword>
<keyword id="KW-0472">Membrane</keyword>
<keyword id="KW-0653">Protein transport</keyword>
<keyword id="KW-1185">Reference proteome</keyword>
<keyword id="KW-0813">Transport</keyword>
<evidence type="ECO:0000250" key="1"/>
<evidence type="ECO:0000255" key="2">
    <source>
        <dbReference type="PROSITE-ProRule" id="PRU00147"/>
    </source>
</evidence>
<evidence type="ECO:0000256" key="3">
    <source>
        <dbReference type="SAM" id="MobiDB-lite"/>
    </source>
</evidence>
<evidence type="ECO:0000305" key="4"/>
<comment type="function">
    <text evidence="1">Required for vacuolar protein sorting.</text>
</comment>
<comment type="subcellular location">
    <subcellularLocation>
        <location evidence="1">Cytoplasm</location>
    </subcellularLocation>
    <subcellularLocation>
        <location evidence="1">Membrane</location>
        <topology evidence="1">Peripheral membrane protein</topology>
        <orientation evidence="1">Cytoplasmic side</orientation>
    </subcellularLocation>
</comment>
<comment type="domain">
    <text evidence="1">The PX domain binds phosphatidylinositol 3-phosphate which is necessary for peripheral membrane localization.</text>
</comment>
<comment type="similarity">
    <text evidence="4">Belongs to the sorting nexin family.</text>
</comment>
<sequence>MSRHHRPFTWGGAQPGASFSNPTSPTLEASTFGFEPSVPDIYRRAWILVTKDASAELFADTSDADIHLGLLHKLLTSAGGLGPGSAEQIVNSACKGSRCSRSDFYCALGLLHQMQQGEELDVHLVQQRLTMGSLSAPVLDLSDATLNPHSHHTFPPTAPSGPSRIDPRPSTFMREMSDPWNANSSGSYNGIDTRPAYNQYDAMPQQYDTLNSHDSALPAGFAGNVSSGSFERIKFNAGDDRRSHQLLAHNQGSSTDTFLAPDRTEARARQPNTRQERPFSYMSDTAETNAVDAAEDPAADLPEDQVTVRLRSELEGFIIKHNVYIVSSSLRKSQVTRRYSDWLWLAECLVKRYPFRCLPVLPPKRIAMPIAGRHLSADDLFIERRRRGLERFLRMLTCHPMLREDKLVEVFFTEPRPIAEWKSSAPALFLDEEGLIKTVDEAERMSIPEDLQLKLTQQRQAIPELLERWTAMVALFERIVKRNDAAAADYSRLNFSLLSVIETSARRWRPGSDNGKKTEEIMSTMASIFQDHSDTTSSRVSAVSLSTLEGMKAQRDLILSFRDLIGRIDRQLVDPIDMLKKRIEASQKRITTLAASANSNSASIQQEQATLSAQVKQDTQSIQKYLNRRIHAKKTVWEELIWFHHRFKAVEEDMQKFVRDETFFLSTLTRMWEATEMKMKMIR</sequence>
<accession>Q4PHC3</accession>
<accession>A0A0D1D130</accession>
<proteinExistence type="inferred from homology"/>
<reference key="1">
    <citation type="journal article" date="2006" name="Nature">
        <title>Insights from the genome of the biotrophic fungal plant pathogen Ustilago maydis.</title>
        <authorList>
            <person name="Kaemper J."/>
            <person name="Kahmann R."/>
            <person name="Boelker M."/>
            <person name="Ma L.-J."/>
            <person name="Brefort T."/>
            <person name="Saville B.J."/>
            <person name="Banuett F."/>
            <person name="Kronstad J.W."/>
            <person name="Gold S.E."/>
            <person name="Mueller O."/>
            <person name="Perlin M.H."/>
            <person name="Woesten H.A.B."/>
            <person name="de Vries R."/>
            <person name="Ruiz-Herrera J."/>
            <person name="Reynaga-Pena C.G."/>
            <person name="Snetselaar K."/>
            <person name="McCann M."/>
            <person name="Perez-Martin J."/>
            <person name="Feldbruegge M."/>
            <person name="Basse C.W."/>
            <person name="Steinberg G."/>
            <person name="Ibeas J.I."/>
            <person name="Holloman W."/>
            <person name="Guzman P."/>
            <person name="Farman M.L."/>
            <person name="Stajich J.E."/>
            <person name="Sentandreu R."/>
            <person name="Gonzalez-Prieto J.M."/>
            <person name="Kennell J.C."/>
            <person name="Molina L."/>
            <person name="Schirawski J."/>
            <person name="Mendoza-Mendoza A."/>
            <person name="Greilinger D."/>
            <person name="Muench K."/>
            <person name="Roessel N."/>
            <person name="Scherer M."/>
            <person name="Vranes M."/>
            <person name="Ladendorf O."/>
            <person name="Vincon V."/>
            <person name="Fuchs U."/>
            <person name="Sandrock B."/>
            <person name="Meng S."/>
            <person name="Ho E.C.H."/>
            <person name="Cahill M.J."/>
            <person name="Boyce K.J."/>
            <person name="Klose J."/>
            <person name="Klosterman S.J."/>
            <person name="Deelstra H.J."/>
            <person name="Ortiz-Castellanos L."/>
            <person name="Li W."/>
            <person name="Sanchez-Alonso P."/>
            <person name="Schreier P.H."/>
            <person name="Haeuser-Hahn I."/>
            <person name="Vaupel M."/>
            <person name="Koopmann E."/>
            <person name="Friedrich G."/>
            <person name="Voss H."/>
            <person name="Schlueter T."/>
            <person name="Margolis J."/>
            <person name="Platt D."/>
            <person name="Swimmer C."/>
            <person name="Gnirke A."/>
            <person name="Chen F."/>
            <person name="Vysotskaia V."/>
            <person name="Mannhaupt G."/>
            <person name="Gueldener U."/>
            <person name="Muensterkoetter M."/>
            <person name="Haase D."/>
            <person name="Oesterheld M."/>
            <person name="Mewes H.-W."/>
            <person name="Mauceli E.W."/>
            <person name="DeCaprio D."/>
            <person name="Wade C.M."/>
            <person name="Butler J."/>
            <person name="Young S.K."/>
            <person name="Jaffe D.B."/>
            <person name="Calvo S.E."/>
            <person name="Nusbaum C."/>
            <person name="Galagan J.E."/>
            <person name="Birren B.W."/>
        </authorList>
    </citation>
    <scope>NUCLEOTIDE SEQUENCE [LARGE SCALE GENOMIC DNA]</scope>
    <source>
        <strain>DSM 14603 / FGSC 9021 / UM521</strain>
    </source>
</reference>
<reference key="2">
    <citation type="submission" date="2014-09" db="EMBL/GenBank/DDBJ databases">
        <authorList>
            <person name="Gueldener U."/>
            <person name="Muensterkoetter M."/>
            <person name="Walter M.C."/>
            <person name="Mannhaupt G."/>
            <person name="Kahmann R."/>
        </authorList>
    </citation>
    <scope>GENOME REANNOTATION</scope>
    <source>
        <strain>DSM 14603 / FGSC 9021 / UM521</strain>
    </source>
</reference>